<dbReference type="EC" id="3.1.21.10" evidence="1"/>
<dbReference type="EMBL" id="CP000850">
    <property type="protein sequence ID" value="ABV97684.1"/>
    <property type="molecule type" value="Genomic_DNA"/>
</dbReference>
<dbReference type="SMR" id="A8LXW7"/>
<dbReference type="STRING" id="391037.Sare_1798"/>
<dbReference type="KEGG" id="saq:Sare_1798"/>
<dbReference type="PATRIC" id="fig|391037.6.peg.1829"/>
<dbReference type="eggNOG" id="COG0817">
    <property type="taxonomic scope" value="Bacteria"/>
</dbReference>
<dbReference type="HOGENOM" id="CLU_091257_0_2_11"/>
<dbReference type="GO" id="GO:0005737">
    <property type="term" value="C:cytoplasm"/>
    <property type="evidence" value="ECO:0007669"/>
    <property type="project" value="UniProtKB-SubCell"/>
</dbReference>
<dbReference type="GO" id="GO:0048476">
    <property type="term" value="C:Holliday junction resolvase complex"/>
    <property type="evidence" value="ECO:0007669"/>
    <property type="project" value="UniProtKB-UniRule"/>
</dbReference>
<dbReference type="GO" id="GO:0008821">
    <property type="term" value="F:crossover junction DNA endonuclease activity"/>
    <property type="evidence" value="ECO:0007669"/>
    <property type="project" value="UniProtKB-UniRule"/>
</dbReference>
<dbReference type="GO" id="GO:0003677">
    <property type="term" value="F:DNA binding"/>
    <property type="evidence" value="ECO:0007669"/>
    <property type="project" value="UniProtKB-KW"/>
</dbReference>
<dbReference type="GO" id="GO:0000287">
    <property type="term" value="F:magnesium ion binding"/>
    <property type="evidence" value="ECO:0007669"/>
    <property type="project" value="UniProtKB-UniRule"/>
</dbReference>
<dbReference type="GO" id="GO:0006310">
    <property type="term" value="P:DNA recombination"/>
    <property type="evidence" value="ECO:0007669"/>
    <property type="project" value="UniProtKB-UniRule"/>
</dbReference>
<dbReference type="GO" id="GO:0006281">
    <property type="term" value="P:DNA repair"/>
    <property type="evidence" value="ECO:0007669"/>
    <property type="project" value="UniProtKB-UniRule"/>
</dbReference>
<dbReference type="CDD" id="cd16962">
    <property type="entry name" value="RuvC"/>
    <property type="match status" value="1"/>
</dbReference>
<dbReference type="FunFam" id="3.30.420.10:FF:000002">
    <property type="entry name" value="Crossover junction endodeoxyribonuclease RuvC"/>
    <property type="match status" value="1"/>
</dbReference>
<dbReference type="Gene3D" id="3.30.420.10">
    <property type="entry name" value="Ribonuclease H-like superfamily/Ribonuclease H"/>
    <property type="match status" value="1"/>
</dbReference>
<dbReference type="HAMAP" id="MF_00034">
    <property type="entry name" value="RuvC"/>
    <property type="match status" value="1"/>
</dbReference>
<dbReference type="InterPro" id="IPR012337">
    <property type="entry name" value="RNaseH-like_sf"/>
</dbReference>
<dbReference type="InterPro" id="IPR036397">
    <property type="entry name" value="RNaseH_sf"/>
</dbReference>
<dbReference type="InterPro" id="IPR020563">
    <property type="entry name" value="X-over_junc_endoDNase_Mg_BS"/>
</dbReference>
<dbReference type="InterPro" id="IPR002176">
    <property type="entry name" value="X-over_junc_endoDNase_RuvC"/>
</dbReference>
<dbReference type="NCBIfam" id="NF000711">
    <property type="entry name" value="PRK00039.2-1"/>
    <property type="match status" value="1"/>
</dbReference>
<dbReference type="NCBIfam" id="TIGR00228">
    <property type="entry name" value="ruvC"/>
    <property type="match status" value="1"/>
</dbReference>
<dbReference type="PANTHER" id="PTHR30194">
    <property type="entry name" value="CROSSOVER JUNCTION ENDODEOXYRIBONUCLEASE RUVC"/>
    <property type="match status" value="1"/>
</dbReference>
<dbReference type="PANTHER" id="PTHR30194:SF3">
    <property type="entry name" value="CROSSOVER JUNCTION ENDODEOXYRIBONUCLEASE RUVC"/>
    <property type="match status" value="1"/>
</dbReference>
<dbReference type="Pfam" id="PF02075">
    <property type="entry name" value="RuvC"/>
    <property type="match status" value="1"/>
</dbReference>
<dbReference type="PRINTS" id="PR00696">
    <property type="entry name" value="RSOLVASERUVC"/>
</dbReference>
<dbReference type="SUPFAM" id="SSF53098">
    <property type="entry name" value="Ribonuclease H-like"/>
    <property type="match status" value="1"/>
</dbReference>
<dbReference type="PROSITE" id="PS01321">
    <property type="entry name" value="RUVC"/>
    <property type="match status" value="1"/>
</dbReference>
<keyword id="KW-0963">Cytoplasm</keyword>
<keyword id="KW-0227">DNA damage</keyword>
<keyword id="KW-0233">DNA recombination</keyword>
<keyword id="KW-0234">DNA repair</keyword>
<keyword id="KW-0238">DNA-binding</keyword>
<keyword id="KW-0255">Endonuclease</keyword>
<keyword id="KW-0378">Hydrolase</keyword>
<keyword id="KW-0460">Magnesium</keyword>
<keyword id="KW-0479">Metal-binding</keyword>
<keyword id="KW-0540">Nuclease</keyword>
<protein>
    <recommendedName>
        <fullName evidence="1">Crossover junction endodeoxyribonuclease RuvC</fullName>
        <ecNumber evidence="1">3.1.21.10</ecNumber>
    </recommendedName>
    <alternativeName>
        <fullName evidence="1">Holliday junction nuclease RuvC</fullName>
    </alternativeName>
    <alternativeName>
        <fullName evidence="1">Holliday junction resolvase RuvC</fullName>
    </alternativeName>
</protein>
<evidence type="ECO:0000255" key="1">
    <source>
        <dbReference type="HAMAP-Rule" id="MF_00034"/>
    </source>
</evidence>
<name>RUVC_SALAI</name>
<proteinExistence type="inferred from homology"/>
<gene>
    <name evidence="1" type="primary">ruvC</name>
    <name type="ordered locus">Sare_1798</name>
</gene>
<accession>A8LXW7</accession>
<feature type="chain" id="PRO_0000332439" description="Crossover junction endodeoxyribonuclease RuvC">
    <location>
        <begin position="1"/>
        <end position="175"/>
    </location>
</feature>
<feature type="active site" evidence="1">
    <location>
        <position position="7"/>
    </location>
</feature>
<feature type="active site" evidence="1">
    <location>
        <position position="68"/>
    </location>
</feature>
<feature type="active site" evidence="1">
    <location>
        <position position="141"/>
    </location>
</feature>
<feature type="binding site" evidence="1">
    <location>
        <position position="7"/>
    </location>
    <ligand>
        <name>Mg(2+)</name>
        <dbReference type="ChEBI" id="CHEBI:18420"/>
        <label>1</label>
    </ligand>
</feature>
<feature type="binding site" evidence="1">
    <location>
        <position position="68"/>
    </location>
    <ligand>
        <name>Mg(2+)</name>
        <dbReference type="ChEBI" id="CHEBI:18420"/>
        <label>2</label>
    </ligand>
</feature>
<feature type="binding site" evidence="1">
    <location>
        <position position="141"/>
    </location>
    <ligand>
        <name>Mg(2+)</name>
        <dbReference type="ChEBI" id="CHEBI:18420"/>
        <label>1</label>
    </ligand>
</feature>
<organism>
    <name type="scientific">Salinispora arenicola (strain CNS-205)</name>
    <dbReference type="NCBI Taxonomy" id="391037"/>
    <lineage>
        <taxon>Bacteria</taxon>
        <taxon>Bacillati</taxon>
        <taxon>Actinomycetota</taxon>
        <taxon>Actinomycetes</taxon>
        <taxon>Micromonosporales</taxon>
        <taxon>Micromonosporaceae</taxon>
        <taxon>Salinispora</taxon>
    </lineage>
</organism>
<sequence length="175" mass="18383">MRVLGIDPGLTRCGVGVVEGVPGRPCTLIAYHVVRTDPDDELPLRLLHLDRSLTALVAEHRPDGVAVERVFSQHNVRTVMGTAQASGVAVLAGARAGIPVQTYTPSEVKAAVTGSGQADKAQMTAMVTRLLRLSEPPRPADAADALALAICHVWRGGTRSRLAAAADRARRGGGR</sequence>
<comment type="function">
    <text evidence="1">The RuvA-RuvB-RuvC complex processes Holliday junction (HJ) DNA during genetic recombination and DNA repair. Endonuclease that resolves HJ intermediates. Cleaves cruciform DNA by making single-stranded nicks across the HJ at symmetrical positions within the homologous arms, yielding a 5'-phosphate and a 3'-hydroxyl group; requires a central core of homology in the junction. The consensus cleavage sequence is 5'-(A/T)TT(C/G)-3'. Cleavage occurs on the 3'-side of the TT dinucleotide at the point of strand exchange. HJ branch migration catalyzed by RuvA-RuvB allows RuvC to scan DNA until it finds its consensus sequence, where it cleaves and resolves the cruciform DNA.</text>
</comment>
<comment type="catalytic activity">
    <reaction evidence="1">
        <text>Endonucleolytic cleavage at a junction such as a reciprocal single-stranded crossover between two homologous DNA duplexes (Holliday junction).</text>
        <dbReference type="EC" id="3.1.21.10"/>
    </reaction>
</comment>
<comment type="cofactor">
    <cofactor evidence="1">
        <name>Mg(2+)</name>
        <dbReference type="ChEBI" id="CHEBI:18420"/>
    </cofactor>
    <text evidence="1">Binds 2 Mg(2+) ion per subunit.</text>
</comment>
<comment type="subunit">
    <text evidence="1">Homodimer which binds Holliday junction (HJ) DNA. The HJ becomes 2-fold symmetrical on binding to RuvC with unstacked arms; it has a different conformation from HJ DNA in complex with RuvA. In the full resolvosome a probable DNA-RuvA(4)-RuvB(12)-RuvC(2) complex forms which resolves the HJ.</text>
</comment>
<comment type="subcellular location">
    <subcellularLocation>
        <location evidence="1">Cytoplasm</location>
    </subcellularLocation>
</comment>
<comment type="similarity">
    <text evidence="1">Belongs to the RuvC family.</text>
</comment>
<reference key="1">
    <citation type="submission" date="2007-10" db="EMBL/GenBank/DDBJ databases">
        <title>Complete sequence of Salinispora arenicola CNS-205.</title>
        <authorList>
            <consortium name="US DOE Joint Genome Institute"/>
            <person name="Copeland A."/>
            <person name="Lucas S."/>
            <person name="Lapidus A."/>
            <person name="Barry K."/>
            <person name="Glavina del Rio T."/>
            <person name="Dalin E."/>
            <person name="Tice H."/>
            <person name="Pitluck S."/>
            <person name="Foster B."/>
            <person name="Schmutz J."/>
            <person name="Larimer F."/>
            <person name="Land M."/>
            <person name="Hauser L."/>
            <person name="Kyrpides N."/>
            <person name="Ivanova N."/>
            <person name="Jensen P.R."/>
            <person name="Moore B.S."/>
            <person name="Penn K."/>
            <person name="Jenkins C."/>
            <person name="Udwary D."/>
            <person name="Xiang L."/>
            <person name="Gontang E."/>
            <person name="Richardson P."/>
        </authorList>
    </citation>
    <scope>NUCLEOTIDE SEQUENCE [LARGE SCALE GENOMIC DNA]</scope>
    <source>
        <strain>CNS-205</strain>
    </source>
</reference>